<evidence type="ECO:0000250" key="1">
    <source>
        <dbReference type="UniProtKB" id="P46664"/>
    </source>
</evidence>
<evidence type="ECO:0000255" key="2">
    <source>
        <dbReference type="HAMAP-Rule" id="MF_03127"/>
    </source>
</evidence>
<evidence type="ECO:0000256" key="3">
    <source>
        <dbReference type="SAM" id="MobiDB-lite"/>
    </source>
</evidence>
<evidence type="ECO:0000269" key="4">
    <source>
    </source>
</evidence>
<comment type="function">
    <text evidence="1">Plays an important role in the de novo pathway and in the salvage pathway of purine nucleotide biosynthesis. Catalyzes the first committed step in the biosynthesis of AMP from IMP.</text>
</comment>
<comment type="catalytic activity">
    <reaction evidence="2">
        <text>IMP + L-aspartate + GTP = N(6)-(1,2-dicarboxyethyl)-AMP + GDP + phosphate + 2 H(+)</text>
        <dbReference type="Rhea" id="RHEA:15753"/>
        <dbReference type="ChEBI" id="CHEBI:15378"/>
        <dbReference type="ChEBI" id="CHEBI:29991"/>
        <dbReference type="ChEBI" id="CHEBI:37565"/>
        <dbReference type="ChEBI" id="CHEBI:43474"/>
        <dbReference type="ChEBI" id="CHEBI:57567"/>
        <dbReference type="ChEBI" id="CHEBI:58053"/>
        <dbReference type="ChEBI" id="CHEBI:58189"/>
        <dbReference type="EC" id="6.3.4.4"/>
    </reaction>
</comment>
<comment type="cofactor">
    <cofactor evidence="2">
        <name>Mg(2+)</name>
        <dbReference type="ChEBI" id="CHEBI:18420"/>
    </cofactor>
    <text evidence="2">Binds 1 Mg(2+) ion per subunit.</text>
</comment>
<comment type="activity regulation">
    <text evidence="1">Inhibited competitively by AMP and IMP and non-competitively by fructose 1,6-bisphosphate.</text>
</comment>
<comment type="pathway">
    <text evidence="2">Purine metabolism; AMP biosynthesis via de novo pathway; AMP from IMP: step 1/2.</text>
</comment>
<comment type="subunit">
    <text evidence="2">Homodimer.</text>
</comment>
<comment type="subcellular location">
    <subcellularLocation>
        <location evidence="2">Cytoplasm</location>
    </subcellularLocation>
    <subcellularLocation>
        <location evidence="4">Mitochondrion</location>
    </subcellularLocation>
</comment>
<comment type="tissue specificity">
    <text evidence="4">Widely expressed.</text>
</comment>
<comment type="similarity">
    <text evidence="2">Belongs to the adenylosuccinate synthetase family.</text>
</comment>
<feature type="chain" id="PRO_0000321959" description="Adenylosuccinate synthetase isozyme 2">
    <location>
        <begin position="1"/>
        <end position="456"/>
    </location>
</feature>
<feature type="region of interest" description="Disordered" evidence="3">
    <location>
        <begin position="1"/>
        <end position="24"/>
    </location>
</feature>
<feature type="active site" description="Proton acceptor" evidence="2">
    <location>
        <position position="40"/>
    </location>
</feature>
<feature type="active site" description="Proton donor" evidence="2">
    <location>
        <position position="68"/>
    </location>
</feature>
<feature type="binding site" evidence="2">
    <location>
        <begin position="39"/>
        <end position="45"/>
    </location>
    <ligand>
        <name>GTP</name>
        <dbReference type="ChEBI" id="CHEBI:37565"/>
    </ligand>
</feature>
<feature type="binding site" description="in other chain" evidence="2">
    <location>
        <begin position="40"/>
        <end position="43"/>
    </location>
    <ligand>
        <name>IMP</name>
        <dbReference type="ChEBI" id="CHEBI:58053"/>
        <note>ligand shared between dimeric partners</note>
    </ligand>
</feature>
<feature type="binding site" evidence="2">
    <location>
        <position position="40"/>
    </location>
    <ligand>
        <name>Mg(2+)</name>
        <dbReference type="ChEBI" id="CHEBI:18420"/>
    </ligand>
</feature>
<feature type="binding site" evidence="2">
    <location>
        <position position="40"/>
    </location>
    <ligand>
        <name>substrate</name>
    </ligand>
</feature>
<feature type="binding site" description="in other chain" evidence="2">
    <location>
        <begin position="65"/>
        <end position="68"/>
    </location>
    <ligand>
        <name>IMP</name>
        <dbReference type="ChEBI" id="CHEBI:58053"/>
        <note>ligand shared between dimeric partners</note>
    </ligand>
</feature>
<feature type="binding site" evidence="2">
    <location>
        <begin position="67"/>
        <end position="69"/>
    </location>
    <ligand>
        <name>GTP</name>
        <dbReference type="ChEBI" id="CHEBI:37565"/>
    </ligand>
</feature>
<feature type="binding site" evidence="2">
    <location>
        <position position="67"/>
    </location>
    <ligand>
        <name>Mg(2+)</name>
        <dbReference type="ChEBI" id="CHEBI:18420"/>
    </ligand>
</feature>
<feature type="binding site" description="in other chain" evidence="2">
    <location>
        <position position="162"/>
    </location>
    <ligand>
        <name>IMP</name>
        <dbReference type="ChEBI" id="CHEBI:58053"/>
        <note>ligand shared between dimeric partners</note>
    </ligand>
</feature>
<feature type="binding site" evidence="2">
    <location>
        <position position="176"/>
    </location>
    <ligand>
        <name>IMP</name>
        <dbReference type="ChEBI" id="CHEBI:58053"/>
        <note>ligand shared between dimeric partners</note>
    </ligand>
</feature>
<feature type="binding site" description="in other chain" evidence="2">
    <location>
        <position position="255"/>
    </location>
    <ligand>
        <name>IMP</name>
        <dbReference type="ChEBI" id="CHEBI:58053"/>
        <note>ligand shared between dimeric partners</note>
    </ligand>
</feature>
<feature type="binding site" description="in other chain" evidence="2">
    <location>
        <position position="270"/>
    </location>
    <ligand>
        <name>IMP</name>
        <dbReference type="ChEBI" id="CHEBI:58053"/>
        <note>ligand shared between dimeric partners</note>
    </ligand>
</feature>
<feature type="binding site" evidence="2">
    <location>
        <begin position="330"/>
        <end position="336"/>
    </location>
    <ligand>
        <name>substrate</name>
    </ligand>
</feature>
<feature type="binding site" description="in other chain" evidence="2">
    <location>
        <position position="334"/>
    </location>
    <ligand>
        <name>IMP</name>
        <dbReference type="ChEBI" id="CHEBI:58053"/>
        <note>ligand shared between dimeric partners</note>
    </ligand>
</feature>
<feature type="binding site" evidence="2">
    <location>
        <position position="336"/>
    </location>
    <ligand>
        <name>GTP</name>
        <dbReference type="ChEBI" id="CHEBI:37565"/>
    </ligand>
</feature>
<feature type="binding site" evidence="2">
    <location>
        <begin position="362"/>
        <end position="364"/>
    </location>
    <ligand>
        <name>GTP</name>
        <dbReference type="ChEBI" id="CHEBI:37565"/>
    </ligand>
</feature>
<feature type="binding site" evidence="2">
    <location>
        <begin position="444"/>
        <end position="447"/>
    </location>
    <ligand>
        <name>GTP</name>
        <dbReference type="ChEBI" id="CHEBI:37565"/>
    </ligand>
</feature>
<sequence>MAFAETNPAASSLPNGDCGRPRARPGGNRVTVVLGAQWGDEGKGKVVDLLAQDADIVCRCQGGNNAGHTVVVDSVEYDFHLLPSGIINPNVTAFIGNGVVIHLPGLFEEAEKNVQKGKGLEGWEKRLIISDRAHIVFDFHQAADGIQEQQRQEQAGKNLGTTKKGIGPVYSSKAARSGLRMCDLVSDFDGFSERFKVLANQYKSIYPTLEIDIEGELQKLKGYMERIKPMVRDGVYFLYEALHGPPKKILVEGANAALLDIDFGTYPFVTSSNCTVGGVCTGLGMPPQNVGEVYGVVKAYTTRVGIGAFPTEQDNEIGELLQTRGREFGVTTGRKRRCGWLDLVLLKYAHMINGFTALALTKLDILDMFTEIKVGVAYKLDGEIIPHFPANQEVLNKVEVQYKTLPGWNTDISNARTFKELPVNAQNYVRFIEDELQIPVKWIGVGKSRESMIQLF</sequence>
<keyword id="KW-0963">Cytoplasm</keyword>
<keyword id="KW-0342">GTP-binding</keyword>
<keyword id="KW-0436">Ligase</keyword>
<keyword id="KW-0460">Magnesium</keyword>
<keyword id="KW-0479">Metal-binding</keyword>
<keyword id="KW-0496">Mitochondrion</keyword>
<keyword id="KW-0547">Nucleotide-binding</keyword>
<keyword id="KW-0658">Purine biosynthesis</keyword>
<keyword id="KW-1185">Reference proteome</keyword>
<protein>
    <recommendedName>
        <fullName evidence="2">Adenylosuccinate synthetase isozyme 2</fullName>
        <shortName evidence="2">AMPSase 2</shortName>
        <shortName evidence="2">AdSS 2</shortName>
        <ecNumber evidence="2">6.3.4.4</ecNumber>
    </recommendedName>
    <alternativeName>
        <fullName evidence="2">Adenylosuccinate synthetase, acidic isozyme</fullName>
    </alternativeName>
    <alternativeName>
        <fullName evidence="2">Adenylosuccinate synthetase, liver isozyme</fullName>
        <shortName evidence="2">L-type adenylosuccinate synthetase</shortName>
    </alternativeName>
    <alternativeName>
        <fullName evidence="2">IMP--aspartate ligase 2</fullName>
    </alternativeName>
</protein>
<gene>
    <name evidence="2" type="primary">ADSS2</name>
    <name evidence="2" type="synonym">ADSS</name>
</gene>
<organism>
    <name type="scientific">Sus scrofa</name>
    <name type="common">Pig</name>
    <dbReference type="NCBI Taxonomy" id="9823"/>
    <lineage>
        <taxon>Eukaryota</taxon>
        <taxon>Metazoa</taxon>
        <taxon>Chordata</taxon>
        <taxon>Craniata</taxon>
        <taxon>Vertebrata</taxon>
        <taxon>Euteleostomi</taxon>
        <taxon>Mammalia</taxon>
        <taxon>Eutheria</taxon>
        <taxon>Laurasiatheria</taxon>
        <taxon>Artiodactyla</taxon>
        <taxon>Suina</taxon>
        <taxon>Suidae</taxon>
        <taxon>Sus</taxon>
    </lineage>
</organism>
<proteinExistence type="evidence at transcript level"/>
<accession>A4Z6H1</accession>
<name>PURA2_PIG</name>
<reference key="1">
    <citation type="journal article" date="2007" name="Comp. Biochem. Physiol.">
        <title>Comparative molecular characterization of ADSS1 and ADSS2 genes in pig (Sus scrofa).</title>
        <authorList>
            <person name="Li X."/>
            <person name="Zhu Z."/>
            <person name="Mo D."/>
            <person name="Wang H."/>
            <person name="Yang S."/>
            <person name="Zhao S."/>
            <person name="Li K."/>
        </authorList>
    </citation>
    <scope>NUCLEOTIDE SEQUENCE [MRNA]</scope>
    <scope>TISSUE SPECIFICITY</scope>
    <scope>SUBCELLULAR LOCATION</scope>
</reference>
<dbReference type="EC" id="6.3.4.4" evidence="2"/>
<dbReference type="EMBL" id="DQ463129">
    <property type="protein sequence ID" value="ABE73156.1"/>
    <property type="molecule type" value="mRNA"/>
</dbReference>
<dbReference type="RefSeq" id="NP_001090977.1">
    <property type="nucleotide sequence ID" value="NM_001097508.1"/>
</dbReference>
<dbReference type="SMR" id="A4Z6H1"/>
<dbReference type="FunCoup" id="A4Z6H1">
    <property type="interactions" value="1693"/>
</dbReference>
<dbReference type="STRING" id="9823.ENSSSCP00000053555"/>
<dbReference type="PaxDb" id="9823-ENSSSCP00000011592"/>
<dbReference type="PeptideAtlas" id="A4Z6H1"/>
<dbReference type="Ensembl" id="ENSSSCT00015051273.1">
    <property type="protein sequence ID" value="ENSSSCP00015020441.1"/>
    <property type="gene ID" value="ENSSSCG00015038467.1"/>
</dbReference>
<dbReference type="Ensembl" id="ENSSSCT00015051412.1">
    <property type="protein sequence ID" value="ENSSSCP00015020504.1"/>
    <property type="gene ID" value="ENSSSCG00015038467.1"/>
</dbReference>
<dbReference type="Ensembl" id="ENSSSCT00030060875.1">
    <property type="protein sequence ID" value="ENSSSCP00030027846.1"/>
    <property type="gene ID" value="ENSSSCG00030043646.1"/>
</dbReference>
<dbReference type="Ensembl" id="ENSSSCT00070011854.1">
    <property type="protein sequence ID" value="ENSSSCP00070009771.1"/>
    <property type="gene ID" value="ENSSSCG00070006212.1"/>
</dbReference>
<dbReference type="Ensembl" id="ENSSSCT00085027452">
    <property type="protein sequence ID" value="ENSSSCP00085018807"/>
    <property type="gene ID" value="ENSSSCG00085014577"/>
</dbReference>
<dbReference type="Ensembl" id="ENSSSCT00105055328">
    <property type="protein sequence ID" value="ENSSSCP00105039024"/>
    <property type="gene ID" value="ENSSSCG00105029067"/>
</dbReference>
<dbReference type="Ensembl" id="ENSSSCT00115029057">
    <property type="protein sequence ID" value="ENSSSCP00115027581"/>
    <property type="gene ID" value="ENSSSCG00115016573"/>
</dbReference>
<dbReference type="Ensembl" id="ENSSSCT00130005521">
    <property type="protein sequence ID" value="ENSSSCP00130003802"/>
    <property type="gene ID" value="ENSSSCG00130002868"/>
</dbReference>
<dbReference type="GeneID" id="100048942"/>
<dbReference type="KEGG" id="ssc:100048942"/>
<dbReference type="CTD" id="159"/>
<dbReference type="eggNOG" id="KOG1355">
    <property type="taxonomic scope" value="Eukaryota"/>
</dbReference>
<dbReference type="InParanoid" id="A4Z6H1"/>
<dbReference type="OMA" id="FHHAKPI"/>
<dbReference type="OrthoDB" id="10265645at2759"/>
<dbReference type="BRENDA" id="6.3.4.4">
    <property type="organism ID" value="6170"/>
</dbReference>
<dbReference type="Reactome" id="R-SSC-73817">
    <property type="pathway name" value="Purine ribonucleoside monophosphate biosynthesis"/>
</dbReference>
<dbReference type="UniPathway" id="UPA00075">
    <property type="reaction ID" value="UER00335"/>
</dbReference>
<dbReference type="Proteomes" id="UP000008227">
    <property type="component" value="Unplaced"/>
</dbReference>
<dbReference type="Proteomes" id="UP000314985">
    <property type="component" value="Chromosome 10"/>
</dbReference>
<dbReference type="Proteomes" id="UP000694570">
    <property type="component" value="Unplaced"/>
</dbReference>
<dbReference type="Proteomes" id="UP000694571">
    <property type="component" value="Unplaced"/>
</dbReference>
<dbReference type="Proteomes" id="UP000694720">
    <property type="component" value="Unplaced"/>
</dbReference>
<dbReference type="Proteomes" id="UP000694722">
    <property type="component" value="Unplaced"/>
</dbReference>
<dbReference type="Proteomes" id="UP000694723">
    <property type="component" value="Unplaced"/>
</dbReference>
<dbReference type="Proteomes" id="UP000694724">
    <property type="component" value="Unplaced"/>
</dbReference>
<dbReference type="Proteomes" id="UP000694725">
    <property type="component" value="Unplaced"/>
</dbReference>
<dbReference type="Proteomes" id="UP000694726">
    <property type="component" value="Unplaced"/>
</dbReference>
<dbReference type="Proteomes" id="UP000694727">
    <property type="component" value="Unplaced"/>
</dbReference>
<dbReference type="Proteomes" id="UP000694728">
    <property type="component" value="Unplaced"/>
</dbReference>
<dbReference type="GO" id="GO:0005737">
    <property type="term" value="C:cytoplasm"/>
    <property type="evidence" value="ECO:0000318"/>
    <property type="project" value="GO_Central"/>
</dbReference>
<dbReference type="GO" id="GO:0005739">
    <property type="term" value="C:mitochondrion"/>
    <property type="evidence" value="ECO:0000314"/>
    <property type="project" value="UniProtKB"/>
</dbReference>
<dbReference type="GO" id="GO:0004019">
    <property type="term" value="F:adenylosuccinate synthase activity"/>
    <property type="evidence" value="ECO:0000318"/>
    <property type="project" value="GO_Central"/>
</dbReference>
<dbReference type="GO" id="GO:0005525">
    <property type="term" value="F:GTP binding"/>
    <property type="evidence" value="ECO:0007669"/>
    <property type="project" value="UniProtKB-UniRule"/>
</dbReference>
<dbReference type="GO" id="GO:0000287">
    <property type="term" value="F:magnesium ion binding"/>
    <property type="evidence" value="ECO:0007669"/>
    <property type="project" value="UniProtKB-UniRule"/>
</dbReference>
<dbReference type="GO" id="GO:0044208">
    <property type="term" value="P:'de novo' AMP biosynthetic process"/>
    <property type="evidence" value="ECO:0000318"/>
    <property type="project" value="GO_Central"/>
</dbReference>
<dbReference type="GO" id="GO:0046040">
    <property type="term" value="P:IMP metabolic process"/>
    <property type="evidence" value="ECO:0000318"/>
    <property type="project" value="GO_Central"/>
</dbReference>
<dbReference type="CDD" id="cd03108">
    <property type="entry name" value="AdSS"/>
    <property type="match status" value="1"/>
</dbReference>
<dbReference type="FunFam" id="3.90.170.10:FF:000001">
    <property type="entry name" value="Adenylosuccinate synthetase"/>
    <property type="match status" value="1"/>
</dbReference>
<dbReference type="FunFam" id="1.10.300.10:FF:000002">
    <property type="entry name" value="Adenylosuccinate synthetase, chloroplastic"/>
    <property type="match status" value="1"/>
</dbReference>
<dbReference type="Gene3D" id="3.40.440.10">
    <property type="entry name" value="Adenylosuccinate Synthetase, subunit A, domain 1"/>
    <property type="match status" value="1"/>
</dbReference>
<dbReference type="Gene3D" id="1.10.300.10">
    <property type="entry name" value="Adenylosuccinate Synthetase, subunit A, domain 2"/>
    <property type="match status" value="1"/>
</dbReference>
<dbReference type="Gene3D" id="3.90.170.10">
    <property type="entry name" value="Adenylosuccinate Synthetase, subunit A, domain 3"/>
    <property type="match status" value="1"/>
</dbReference>
<dbReference type="HAMAP" id="MF_00011">
    <property type="entry name" value="Adenylosucc_synth"/>
    <property type="match status" value="1"/>
</dbReference>
<dbReference type="HAMAP" id="MF_03127">
    <property type="entry name" value="Adenylosucc_synth_vert_acid"/>
    <property type="match status" value="1"/>
</dbReference>
<dbReference type="InterPro" id="IPR018220">
    <property type="entry name" value="Adenylosuccin_syn_GTP-bd"/>
</dbReference>
<dbReference type="InterPro" id="IPR033128">
    <property type="entry name" value="Adenylosuccin_syn_Lys_AS"/>
</dbReference>
<dbReference type="InterPro" id="IPR042109">
    <property type="entry name" value="Adenylosuccinate_synth_dom1"/>
</dbReference>
<dbReference type="InterPro" id="IPR042110">
    <property type="entry name" value="Adenylosuccinate_synth_dom2"/>
</dbReference>
<dbReference type="InterPro" id="IPR042111">
    <property type="entry name" value="Adenylosuccinate_synth_dom3"/>
</dbReference>
<dbReference type="InterPro" id="IPR001114">
    <property type="entry name" value="Adenylosuccinate_synthetase"/>
</dbReference>
<dbReference type="InterPro" id="IPR027529">
    <property type="entry name" value="AdSS_2_vert"/>
</dbReference>
<dbReference type="InterPro" id="IPR027417">
    <property type="entry name" value="P-loop_NTPase"/>
</dbReference>
<dbReference type="NCBIfam" id="NF002223">
    <property type="entry name" value="PRK01117.1"/>
    <property type="match status" value="1"/>
</dbReference>
<dbReference type="NCBIfam" id="TIGR00184">
    <property type="entry name" value="purA"/>
    <property type="match status" value="1"/>
</dbReference>
<dbReference type="PANTHER" id="PTHR11846">
    <property type="entry name" value="ADENYLOSUCCINATE SYNTHETASE"/>
    <property type="match status" value="1"/>
</dbReference>
<dbReference type="PANTHER" id="PTHR11846:SF13">
    <property type="entry name" value="ADENYLOSUCCINATE SYNTHETASE ISOZYME 2"/>
    <property type="match status" value="1"/>
</dbReference>
<dbReference type="Pfam" id="PF00709">
    <property type="entry name" value="Adenylsucc_synt"/>
    <property type="match status" value="1"/>
</dbReference>
<dbReference type="SMART" id="SM00788">
    <property type="entry name" value="Adenylsucc_synt"/>
    <property type="match status" value="1"/>
</dbReference>
<dbReference type="SUPFAM" id="SSF52540">
    <property type="entry name" value="P-loop containing nucleoside triphosphate hydrolases"/>
    <property type="match status" value="1"/>
</dbReference>
<dbReference type="PROSITE" id="PS01266">
    <property type="entry name" value="ADENYLOSUCCIN_SYN_1"/>
    <property type="match status" value="1"/>
</dbReference>
<dbReference type="PROSITE" id="PS00513">
    <property type="entry name" value="ADENYLOSUCCIN_SYN_2"/>
    <property type="match status" value="1"/>
</dbReference>